<evidence type="ECO:0000255" key="1"/>
<evidence type="ECO:0000269" key="2">
    <source>
    </source>
</evidence>
<dbReference type="EMBL" id="BA000022">
    <property type="protein sequence ID" value="BAA18615.1"/>
    <property type="molecule type" value="Genomic_DNA"/>
</dbReference>
<dbReference type="PIR" id="S76486">
    <property type="entry name" value="S76486"/>
</dbReference>
<dbReference type="SMR" id="P74511"/>
<dbReference type="STRING" id="1148.gene:10499498"/>
<dbReference type="PaxDb" id="1148-1653703"/>
<dbReference type="EnsemblBacteria" id="BAA18615">
    <property type="protein sequence ID" value="BAA18615"/>
    <property type="gene ID" value="BAA18615"/>
</dbReference>
<dbReference type="KEGG" id="syn:slr1949"/>
<dbReference type="eggNOG" id="ENOG502Z7WZ">
    <property type="taxonomic scope" value="Bacteria"/>
</dbReference>
<dbReference type="InParanoid" id="P74511"/>
<dbReference type="Proteomes" id="UP000001425">
    <property type="component" value="Chromosome"/>
</dbReference>
<dbReference type="GO" id="GO:0031676">
    <property type="term" value="C:plasma membrane-derived thylakoid membrane"/>
    <property type="evidence" value="ECO:0007669"/>
    <property type="project" value="UniProtKB-SubCell"/>
</dbReference>
<dbReference type="InterPro" id="IPR021751">
    <property type="entry name" value="DUF3318"/>
</dbReference>
<dbReference type="Pfam" id="PF11780">
    <property type="entry name" value="DUF3318"/>
    <property type="match status" value="1"/>
</dbReference>
<accession>P74511</accession>
<gene>
    <name type="ordered locus">slr1949</name>
</gene>
<protein>
    <recommendedName>
        <fullName>Thylakoid membrane protein slr1949</fullName>
    </recommendedName>
</protein>
<reference key="1">
    <citation type="journal article" date="1996" name="DNA Res.">
        <title>Sequence analysis of the genome of the unicellular cyanobacterium Synechocystis sp. strain PCC6803. II. Sequence determination of the entire genome and assignment of potential protein-coding regions.</title>
        <authorList>
            <person name="Kaneko T."/>
            <person name="Sato S."/>
            <person name="Kotani H."/>
            <person name="Tanaka A."/>
            <person name="Asamizu E."/>
            <person name="Nakamura Y."/>
            <person name="Miyajima N."/>
            <person name="Hirosawa M."/>
            <person name="Sugiura M."/>
            <person name="Sasamoto S."/>
            <person name="Kimura T."/>
            <person name="Hosouchi T."/>
            <person name="Matsuno A."/>
            <person name="Muraki A."/>
            <person name="Nakazaki N."/>
            <person name="Naruo K."/>
            <person name="Okumura S."/>
            <person name="Shimpo S."/>
            <person name="Takeuchi C."/>
            <person name="Wada T."/>
            <person name="Watanabe A."/>
            <person name="Yamada M."/>
            <person name="Yasuda M."/>
            <person name="Tabata S."/>
        </authorList>
    </citation>
    <scope>NUCLEOTIDE SEQUENCE [LARGE SCALE GENOMIC DNA]</scope>
    <source>
        <strain>ATCC 27184 / PCC 6803 / Kazusa</strain>
    </source>
</reference>
<reference key="2">
    <citation type="journal article" date="2005" name="Proteomics">
        <title>Proteomic studies of the thylakoid membrane of Synechocystis sp. PCC 6803.</title>
        <authorList>
            <person name="Srivastava R."/>
            <person name="Pisareva T."/>
            <person name="Norling B."/>
        </authorList>
    </citation>
    <scope>SUBCELLULAR LOCATION IN THYLAKOID</scope>
</reference>
<proteinExistence type="predicted"/>
<name>Y1949_SYNY3</name>
<comment type="subcellular location">
    <subcellularLocation>
        <location evidence="2">Cellular thylakoid membrane</location>
        <topology evidence="2">Single-pass membrane protein</topology>
    </subcellularLocation>
</comment>
<sequence>MTSYSSATARAEMSELRRLKSLLPPELQSWVMVEGSTEVNPPLIRSEELGRDEIEIQVDLAKWENLAIDQRNLLFWHEVARIQSDTIPREGWEMAALAIGLGGAVGELWVQDGLLLLLALGLCGISGYRLWQKNNGEKRIKEAIEADEKAITLATRFGYTLPNAYKSLGSAFKTLIEQTPNRRQRKQYETRLQALRQSAAKMKAKTQKAKAL</sequence>
<organism>
    <name type="scientific">Synechocystis sp. (strain ATCC 27184 / PCC 6803 / Kazusa)</name>
    <dbReference type="NCBI Taxonomy" id="1111708"/>
    <lineage>
        <taxon>Bacteria</taxon>
        <taxon>Bacillati</taxon>
        <taxon>Cyanobacteriota</taxon>
        <taxon>Cyanophyceae</taxon>
        <taxon>Synechococcales</taxon>
        <taxon>Merismopediaceae</taxon>
        <taxon>Synechocystis</taxon>
    </lineage>
</organism>
<feature type="chain" id="PRO_0000352743" description="Thylakoid membrane protein slr1949">
    <location>
        <begin position="1"/>
        <end position="212"/>
    </location>
</feature>
<feature type="transmembrane region" description="Helical" evidence="1">
    <location>
        <begin position="109"/>
        <end position="131"/>
    </location>
</feature>
<feature type="coiled-coil region" evidence="1">
    <location>
        <begin position="180"/>
        <end position="212"/>
    </location>
</feature>
<keyword id="KW-0175">Coiled coil</keyword>
<keyword id="KW-0472">Membrane</keyword>
<keyword id="KW-1185">Reference proteome</keyword>
<keyword id="KW-0793">Thylakoid</keyword>
<keyword id="KW-0812">Transmembrane</keyword>
<keyword id="KW-1133">Transmembrane helix</keyword>